<protein>
    <recommendedName>
        <fullName evidence="1">Large ribosomal subunit protein uL30</fullName>
    </recommendedName>
    <alternativeName>
        <fullName evidence="2">50S ribosomal protein L30</fullName>
    </alternativeName>
</protein>
<evidence type="ECO:0000255" key="1">
    <source>
        <dbReference type="HAMAP-Rule" id="MF_01371"/>
    </source>
</evidence>
<evidence type="ECO:0000305" key="2"/>
<name>RL30_METPB</name>
<organism>
    <name type="scientific">Methylorubrum populi (strain ATCC BAA-705 / NCIMB 13946 / BJ001)</name>
    <name type="common">Methylobacterium populi</name>
    <dbReference type="NCBI Taxonomy" id="441620"/>
    <lineage>
        <taxon>Bacteria</taxon>
        <taxon>Pseudomonadati</taxon>
        <taxon>Pseudomonadota</taxon>
        <taxon>Alphaproteobacteria</taxon>
        <taxon>Hyphomicrobiales</taxon>
        <taxon>Methylobacteriaceae</taxon>
        <taxon>Methylorubrum</taxon>
    </lineage>
</organism>
<comment type="subunit">
    <text evidence="1">Part of the 50S ribosomal subunit.</text>
</comment>
<comment type="similarity">
    <text evidence="1">Belongs to the universal ribosomal protein uL30 family.</text>
</comment>
<sequence length="64" mass="7117">MATKTVRIEQIGSPIRREASQRATLIGLKLNKLHRVSELEDTPSVRGMIRKVAHLVRVLDDAAA</sequence>
<gene>
    <name evidence="1" type="primary">rpmD</name>
    <name type="ordered locus">Mpop_2146</name>
</gene>
<feature type="chain" id="PRO_0000347117" description="Large ribosomal subunit protein uL30">
    <location>
        <begin position="1"/>
        <end position="64"/>
    </location>
</feature>
<accession>B1Z775</accession>
<reference key="1">
    <citation type="submission" date="2008-04" db="EMBL/GenBank/DDBJ databases">
        <title>Complete sequence of chromosome of Methylobacterium populi BJ001.</title>
        <authorList>
            <consortium name="US DOE Joint Genome Institute"/>
            <person name="Copeland A."/>
            <person name="Lucas S."/>
            <person name="Lapidus A."/>
            <person name="Glavina del Rio T."/>
            <person name="Dalin E."/>
            <person name="Tice H."/>
            <person name="Bruce D."/>
            <person name="Goodwin L."/>
            <person name="Pitluck S."/>
            <person name="Chertkov O."/>
            <person name="Brettin T."/>
            <person name="Detter J.C."/>
            <person name="Han C."/>
            <person name="Kuske C.R."/>
            <person name="Schmutz J."/>
            <person name="Larimer F."/>
            <person name="Land M."/>
            <person name="Hauser L."/>
            <person name="Kyrpides N."/>
            <person name="Mikhailova N."/>
            <person name="Marx C."/>
            <person name="Richardson P."/>
        </authorList>
    </citation>
    <scope>NUCLEOTIDE SEQUENCE [LARGE SCALE GENOMIC DNA]</scope>
    <source>
        <strain>ATCC BAA-705 / NCIMB 13946 / BJ001</strain>
    </source>
</reference>
<proteinExistence type="inferred from homology"/>
<keyword id="KW-0687">Ribonucleoprotein</keyword>
<keyword id="KW-0689">Ribosomal protein</keyword>
<dbReference type="EMBL" id="CP001029">
    <property type="protein sequence ID" value="ACB80308.1"/>
    <property type="molecule type" value="Genomic_DNA"/>
</dbReference>
<dbReference type="RefSeq" id="WP_012454044.1">
    <property type="nucleotide sequence ID" value="NC_010725.1"/>
</dbReference>
<dbReference type="SMR" id="B1Z775"/>
<dbReference type="STRING" id="441620.Mpop_2146"/>
<dbReference type="KEGG" id="mpo:Mpop_2146"/>
<dbReference type="eggNOG" id="COG1841">
    <property type="taxonomic scope" value="Bacteria"/>
</dbReference>
<dbReference type="HOGENOM" id="CLU_131047_1_2_5"/>
<dbReference type="OrthoDB" id="9812790at2"/>
<dbReference type="Proteomes" id="UP000007136">
    <property type="component" value="Chromosome"/>
</dbReference>
<dbReference type="GO" id="GO:0022625">
    <property type="term" value="C:cytosolic large ribosomal subunit"/>
    <property type="evidence" value="ECO:0007669"/>
    <property type="project" value="TreeGrafter"/>
</dbReference>
<dbReference type="GO" id="GO:0003735">
    <property type="term" value="F:structural constituent of ribosome"/>
    <property type="evidence" value="ECO:0007669"/>
    <property type="project" value="InterPro"/>
</dbReference>
<dbReference type="GO" id="GO:0006412">
    <property type="term" value="P:translation"/>
    <property type="evidence" value="ECO:0007669"/>
    <property type="project" value="UniProtKB-UniRule"/>
</dbReference>
<dbReference type="CDD" id="cd01658">
    <property type="entry name" value="Ribosomal_L30"/>
    <property type="match status" value="1"/>
</dbReference>
<dbReference type="Gene3D" id="3.30.1390.20">
    <property type="entry name" value="Ribosomal protein L30, ferredoxin-like fold domain"/>
    <property type="match status" value="1"/>
</dbReference>
<dbReference type="HAMAP" id="MF_01371_B">
    <property type="entry name" value="Ribosomal_uL30_B"/>
    <property type="match status" value="1"/>
</dbReference>
<dbReference type="InterPro" id="IPR036919">
    <property type="entry name" value="Ribo_uL30_ferredoxin-like_sf"/>
</dbReference>
<dbReference type="InterPro" id="IPR005996">
    <property type="entry name" value="Ribosomal_uL30_bac-type"/>
</dbReference>
<dbReference type="InterPro" id="IPR016082">
    <property type="entry name" value="Ribosomal_uL30_ferredoxin-like"/>
</dbReference>
<dbReference type="NCBIfam" id="TIGR01308">
    <property type="entry name" value="rpmD_bact"/>
    <property type="match status" value="1"/>
</dbReference>
<dbReference type="PANTHER" id="PTHR15892:SF2">
    <property type="entry name" value="LARGE RIBOSOMAL SUBUNIT PROTEIN UL30M"/>
    <property type="match status" value="1"/>
</dbReference>
<dbReference type="PANTHER" id="PTHR15892">
    <property type="entry name" value="MITOCHONDRIAL RIBOSOMAL PROTEIN L30"/>
    <property type="match status" value="1"/>
</dbReference>
<dbReference type="Pfam" id="PF00327">
    <property type="entry name" value="Ribosomal_L30"/>
    <property type="match status" value="1"/>
</dbReference>
<dbReference type="PIRSF" id="PIRSF002211">
    <property type="entry name" value="Ribosomal_L30_bac-type"/>
    <property type="match status" value="1"/>
</dbReference>
<dbReference type="SUPFAM" id="SSF55129">
    <property type="entry name" value="Ribosomal protein L30p/L7e"/>
    <property type="match status" value="1"/>
</dbReference>